<reference key="1">
    <citation type="submission" date="2007-06" db="EMBL/GenBank/DDBJ databases">
        <title>Complete sequence of Clostridium beijerinckii NCIMB 8052.</title>
        <authorList>
            <consortium name="US DOE Joint Genome Institute"/>
            <person name="Copeland A."/>
            <person name="Lucas S."/>
            <person name="Lapidus A."/>
            <person name="Barry K."/>
            <person name="Detter J.C."/>
            <person name="Glavina del Rio T."/>
            <person name="Hammon N."/>
            <person name="Israni S."/>
            <person name="Dalin E."/>
            <person name="Tice H."/>
            <person name="Pitluck S."/>
            <person name="Sims D."/>
            <person name="Brettin T."/>
            <person name="Bruce D."/>
            <person name="Tapia R."/>
            <person name="Brainard J."/>
            <person name="Schmutz J."/>
            <person name="Larimer F."/>
            <person name="Land M."/>
            <person name="Hauser L."/>
            <person name="Kyrpides N."/>
            <person name="Mikhailova N."/>
            <person name="Bennet G."/>
            <person name="Cann I."/>
            <person name="Chen J.-S."/>
            <person name="Contreras A.L."/>
            <person name="Jones D."/>
            <person name="Kashket E."/>
            <person name="Mitchell W."/>
            <person name="Stoddard S."/>
            <person name="Schwarz W."/>
            <person name="Qureshi N."/>
            <person name="Young M."/>
            <person name="Shi Z."/>
            <person name="Ezeji T."/>
            <person name="White B."/>
            <person name="Blaschek H."/>
            <person name="Richardson P."/>
        </authorList>
    </citation>
    <scope>NUCLEOTIDE SEQUENCE [LARGE SCALE GENOMIC DNA]</scope>
    <source>
        <strain>ATCC 51743 / NCIMB 8052</strain>
    </source>
</reference>
<name>AROE_CLOB8</name>
<comment type="function">
    <text evidence="1">Involved in the biosynthesis of the chorismate, which leads to the biosynthesis of aromatic amino acids. Catalyzes the reversible NADPH linked reduction of 3-dehydroshikimate (DHSA) to yield shikimate (SA).</text>
</comment>
<comment type="catalytic activity">
    <reaction evidence="1">
        <text>shikimate + NADP(+) = 3-dehydroshikimate + NADPH + H(+)</text>
        <dbReference type="Rhea" id="RHEA:17737"/>
        <dbReference type="ChEBI" id="CHEBI:15378"/>
        <dbReference type="ChEBI" id="CHEBI:16630"/>
        <dbReference type="ChEBI" id="CHEBI:36208"/>
        <dbReference type="ChEBI" id="CHEBI:57783"/>
        <dbReference type="ChEBI" id="CHEBI:58349"/>
        <dbReference type="EC" id="1.1.1.25"/>
    </reaction>
</comment>
<comment type="pathway">
    <text evidence="1">Metabolic intermediate biosynthesis; chorismate biosynthesis; chorismate from D-erythrose 4-phosphate and phosphoenolpyruvate: step 4/7.</text>
</comment>
<comment type="subunit">
    <text evidence="1">Homodimer.</text>
</comment>
<comment type="similarity">
    <text evidence="1">Belongs to the shikimate dehydrogenase family.</text>
</comment>
<protein>
    <recommendedName>
        <fullName evidence="1">Shikimate dehydrogenase (NADP(+))</fullName>
        <shortName evidence="1">SDH</shortName>
        <ecNumber evidence="1">1.1.1.25</ecNumber>
    </recommendedName>
</protein>
<gene>
    <name evidence="1" type="primary">aroE</name>
    <name type="ordered locus">Cbei_4572</name>
</gene>
<dbReference type="EC" id="1.1.1.25" evidence="1"/>
<dbReference type="EMBL" id="CP000721">
    <property type="protein sequence ID" value="ABR36681.1"/>
    <property type="molecule type" value="Genomic_DNA"/>
</dbReference>
<dbReference type="RefSeq" id="WP_012060728.1">
    <property type="nucleotide sequence ID" value="NC_009617.1"/>
</dbReference>
<dbReference type="SMR" id="A6M251"/>
<dbReference type="KEGG" id="cbe:Cbei_4572"/>
<dbReference type="eggNOG" id="COG0169">
    <property type="taxonomic scope" value="Bacteria"/>
</dbReference>
<dbReference type="HOGENOM" id="CLU_044063_4_1_9"/>
<dbReference type="UniPathway" id="UPA00053">
    <property type="reaction ID" value="UER00087"/>
</dbReference>
<dbReference type="Proteomes" id="UP000000565">
    <property type="component" value="Chromosome"/>
</dbReference>
<dbReference type="GO" id="GO:0005829">
    <property type="term" value="C:cytosol"/>
    <property type="evidence" value="ECO:0007669"/>
    <property type="project" value="TreeGrafter"/>
</dbReference>
<dbReference type="GO" id="GO:0050661">
    <property type="term" value="F:NADP binding"/>
    <property type="evidence" value="ECO:0007669"/>
    <property type="project" value="InterPro"/>
</dbReference>
<dbReference type="GO" id="GO:0004764">
    <property type="term" value="F:shikimate 3-dehydrogenase (NADP+) activity"/>
    <property type="evidence" value="ECO:0007669"/>
    <property type="project" value="UniProtKB-UniRule"/>
</dbReference>
<dbReference type="GO" id="GO:0008652">
    <property type="term" value="P:amino acid biosynthetic process"/>
    <property type="evidence" value="ECO:0007669"/>
    <property type="project" value="UniProtKB-KW"/>
</dbReference>
<dbReference type="GO" id="GO:0009073">
    <property type="term" value="P:aromatic amino acid family biosynthetic process"/>
    <property type="evidence" value="ECO:0007669"/>
    <property type="project" value="UniProtKB-KW"/>
</dbReference>
<dbReference type="GO" id="GO:0009423">
    <property type="term" value="P:chorismate biosynthetic process"/>
    <property type="evidence" value="ECO:0007669"/>
    <property type="project" value="UniProtKB-UniRule"/>
</dbReference>
<dbReference type="GO" id="GO:0019632">
    <property type="term" value="P:shikimate metabolic process"/>
    <property type="evidence" value="ECO:0007669"/>
    <property type="project" value="InterPro"/>
</dbReference>
<dbReference type="CDD" id="cd01065">
    <property type="entry name" value="NAD_bind_Shikimate_DH"/>
    <property type="match status" value="1"/>
</dbReference>
<dbReference type="Gene3D" id="3.40.50.10860">
    <property type="entry name" value="Leucine Dehydrogenase, chain A, domain 1"/>
    <property type="match status" value="1"/>
</dbReference>
<dbReference type="Gene3D" id="3.40.50.720">
    <property type="entry name" value="NAD(P)-binding Rossmann-like Domain"/>
    <property type="match status" value="1"/>
</dbReference>
<dbReference type="HAMAP" id="MF_00222">
    <property type="entry name" value="Shikimate_DH_AroE"/>
    <property type="match status" value="1"/>
</dbReference>
<dbReference type="InterPro" id="IPR046346">
    <property type="entry name" value="Aminoacid_DH-like_N_sf"/>
</dbReference>
<dbReference type="InterPro" id="IPR036291">
    <property type="entry name" value="NAD(P)-bd_dom_sf"/>
</dbReference>
<dbReference type="InterPro" id="IPR011342">
    <property type="entry name" value="Shikimate_DH"/>
</dbReference>
<dbReference type="InterPro" id="IPR013708">
    <property type="entry name" value="Shikimate_DH-bd_N"/>
</dbReference>
<dbReference type="InterPro" id="IPR022893">
    <property type="entry name" value="Shikimate_DH_fam"/>
</dbReference>
<dbReference type="NCBIfam" id="TIGR00507">
    <property type="entry name" value="aroE"/>
    <property type="match status" value="1"/>
</dbReference>
<dbReference type="PANTHER" id="PTHR21089:SF1">
    <property type="entry name" value="BIFUNCTIONAL 3-DEHYDROQUINATE DEHYDRATASE_SHIKIMATE DEHYDROGENASE, CHLOROPLASTIC"/>
    <property type="match status" value="1"/>
</dbReference>
<dbReference type="PANTHER" id="PTHR21089">
    <property type="entry name" value="SHIKIMATE DEHYDROGENASE"/>
    <property type="match status" value="1"/>
</dbReference>
<dbReference type="Pfam" id="PF08501">
    <property type="entry name" value="Shikimate_dh_N"/>
    <property type="match status" value="1"/>
</dbReference>
<dbReference type="SUPFAM" id="SSF53223">
    <property type="entry name" value="Aminoacid dehydrogenase-like, N-terminal domain"/>
    <property type="match status" value="1"/>
</dbReference>
<dbReference type="SUPFAM" id="SSF51735">
    <property type="entry name" value="NAD(P)-binding Rossmann-fold domains"/>
    <property type="match status" value="1"/>
</dbReference>
<organism>
    <name type="scientific">Clostridium beijerinckii (strain ATCC 51743 / NCIMB 8052)</name>
    <name type="common">Clostridium acetobutylicum</name>
    <dbReference type="NCBI Taxonomy" id="290402"/>
    <lineage>
        <taxon>Bacteria</taxon>
        <taxon>Bacillati</taxon>
        <taxon>Bacillota</taxon>
        <taxon>Clostridia</taxon>
        <taxon>Eubacteriales</taxon>
        <taxon>Clostridiaceae</taxon>
        <taxon>Clostridium</taxon>
    </lineage>
</organism>
<feature type="chain" id="PRO_1000078116" description="Shikimate dehydrogenase (NADP(+))">
    <location>
        <begin position="1"/>
        <end position="270"/>
    </location>
</feature>
<feature type="active site" description="Proton acceptor" evidence="1">
    <location>
        <position position="65"/>
    </location>
</feature>
<feature type="binding site" evidence="1">
    <location>
        <begin position="14"/>
        <end position="16"/>
    </location>
    <ligand>
        <name>shikimate</name>
        <dbReference type="ChEBI" id="CHEBI:36208"/>
    </ligand>
</feature>
<feature type="binding site" evidence="1">
    <location>
        <position position="61"/>
    </location>
    <ligand>
        <name>shikimate</name>
        <dbReference type="ChEBI" id="CHEBI:36208"/>
    </ligand>
</feature>
<feature type="binding site" evidence="1">
    <location>
        <position position="77"/>
    </location>
    <ligand>
        <name>NADP(+)</name>
        <dbReference type="ChEBI" id="CHEBI:58349"/>
    </ligand>
</feature>
<feature type="binding site" evidence="1">
    <location>
        <position position="86"/>
    </location>
    <ligand>
        <name>shikimate</name>
        <dbReference type="ChEBI" id="CHEBI:36208"/>
    </ligand>
</feature>
<feature type="binding site" evidence="1">
    <location>
        <position position="101"/>
    </location>
    <ligand>
        <name>shikimate</name>
        <dbReference type="ChEBI" id="CHEBI:36208"/>
    </ligand>
</feature>
<feature type="binding site" evidence="1">
    <location>
        <begin position="125"/>
        <end position="129"/>
    </location>
    <ligand>
        <name>NADP(+)</name>
        <dbReference type="ChEBI" id="CHEBI:58349"/>
    </ligand>
</feature>
<feature type="binding site" evidence="1">
    <location>
        <position position="210"/>
    </location>
    <ligand>
        <name>NADP(+)</name>
        <dbReference type="ChEBI" id="CHEBI:58349"/>
    </ligand>
</feature>
<feature type="binding site" evidence="1">
    <location>
        <position position="212"/>
    </location>
    <ligand>
        <name>shikimate</name>
        <dbReference type="ChEBI" id="CHEBI:36208"/>
    </ligand>
</feature>
<feature type="binding site" evidence="1">
    <location>
        <position position="233"/>
    </location>
    <ligand>
        <name>NADP(+)</name>
        <dbReference type="ChEBI" id="CHEBI:58349"/>
    </ligand>
</feature>
<evidence type="ECO:0000255" key="1">
    <source>
        <dbReference type="HAMAP-Rule" id="MF_00222"/>
    </source>
</evidence>
<sequence>MEFYGLIGEKLSHSLSPKIHNTLFKDLKIEGAYKLFEVEKENLGKLIESIKLLKIKGVNVTIPYKQDVMEYLDFISDEAKKIGAVNTIYLEDNKLYGYNTDYYGFGTILNNNEIVIRDNVAMVLGNGGAAKAVITYLLDHGIKKIYLVSRKIKGNSADKDERIEFKTYEEISEIKGDILINTTPLGMYPKVDDTPVNEDIINNFNSLIDIIYNPRETRFLKIGKNSNKKVCGGIEMLVGQAIKAEEIWQECQLDNKLTQGLYSIFENEFK</sequence>
<proteinExistence type="inferred from homology"/>
<accession>A6M251</accession>
<keyword id="KW-0028">Amino-acid biosynthesis</keyword>
<keyword id="KW-0057">Aromatic amino acid biosynthesis</keyword>
<keyword id="KW-0521">NADP</keyword>
<keyword id="KW-0560">Oxidoreductase</keyword>